<reference key="1">
    <citation type="journal article" date="2002" name="Proc. Natl. Acad. Sci. U.S.A.">
        <title>The Brucella suis genome reveals fundamental similarities between animal and plant pathogens and symbionts.</title>
        <authorList>
            <person name="Paulsen I.T."/>
            <person name="Seshadri R."/>
            <person name="Nelson K.E."/>
            <person name="Eisen J.A."/>
            <person name="Heidelberg J.F."/>
            <person name="Read T.D."/>
            <person name="Dodson R.J."/>
            <person name="Umayam L.A."/>
            <person name="Brinkac L.M."/>
            <person name="Beanan M.J."/>
            <person name="Daugherty S.C."/>
            <person name="DeBoy R.T."/>
            <person name="Durkin A.S."/>
            <person name="Kolonay J.F."/>
            <person name="Madupu R."/>
            <person name="Nelson W.C."/>
            <person name="Ayodeji B."/>
            <person name="Kraul M."/>
            <person name="Shetty J."/>
            <person name="Malek J.A."/>
            <person name="Van Aken S.E."/>
            <person name="Riedmuller S."/>
            <person name="Tettelin H."/>
            <person name="Gill S.R."/>
            <person name="White O."/>
            <person name="Salzberg S.L."/>
            <person name="Hoover D.L."/>
            <person name="Lindler L.E."/>
            <person name="Halling S.M."/>
            <person name="Boyle S.M."/>
            <person name="Fraser C.M."/>
        </authorList>
    </citation>
    <scope>NUCLEOTIDE SEQUENCE [LARGE SCALE GENOMIC DNA]</scope>
    <source>
        <strain>1330</strain>
    </source>
</reference>
<reference key="2">
    <citation type="journal article" date="2011" name="J. Bacteriol.">
        <title>Revised genome sequence of Brucella suis 1330.</title>
        <authorList>
            <person name="Tae H."/>
            <person name="Shallom S."/>
            <person name="Settlage R."/>
            <person name="Preston D."/>
            <person name="Adams L.G."/>
            <person name="Garner H.R."/>
        </authorList>
    </citation>
    <scope>NUCLEOTIDE SEQUENCE [LARGE SCALE GENOMIC DNA]</scope>
    <source>
        <strain>1330</strain>
    </source>
</reference>
<dbReference type="EC" id="4.2.1.19" evidence="1"/>
<dbReference type="EMBL" id="AE014291">
    <property type="protein sequence ID" value="AAN30971.1"/>
    <property type="molecule type" value="Genomic_DNA"/>
</dbReference>
<dbReference type="EMBL" id="CP002997">
    <property type="protein sequence ID" value="AEM19388.1"/>
    <property type="molecule type" value="Genomic_DNA"/>
</dbReference>
<dbReference type="RefSeq" id="WP_002967034.1">
    <property type="nucleotide sequence ID" value="NZ_KN046804.1"/>
</dbReference>
<dbReference type="SMR" id="P64367"/>
<dbReference type="GeneID" id="97534656"/>
<dbReference type="KEGG" id="bms:BR2081"/>
<dbReference type="KEGG" id="bsi:BS1330_I2075"/>
<dbReference type="PATRIC" id="fig|204722.21.peg.1289"/>
<dbReference type="HOGENOM" id="CLU_044308_3_0_5"/>
<dbReference type="PhylomeDB" id="P64367"/>
<dbReference type="UniPathway" id="UPA00031">
    <property type="reaction ID" value="UER00011"/>
</dbReference>
<dbReference type="Proteomes" id="UP000007104">
    <property type="component" value="Chromosome I"/>
</dbReference>
<dbReference type="GO" id="GO:0005737">
    <property type="term" value="C:cytoplasm"/>
    <property type="evidence" value="ECO:0007669"/>
    <property type="project" value="UniProtKB-SubCell"/>
</dbReference>
<dbReference type="GO" id="GO:0004424">
    <property type="term" value="F:imidazoleglycerol-phosphate dehydratase activity"/>
    <property type="evidence" value="ECO:0007669"/>
    <property type="project" value="UniProtKB-UniRule"/>
</dbReference>
<dbReference type="GO" id="GO:0000105">
    <property type="term" value="P:L-histidine biosynthetic process"/>
    <property type="evidence" value="ECO:0007669"/>
    <property type="project" value="UniProtKB-UniRule"/>
</dbReference>
<dbReference type="CDD" id="cd07914">
    <property type="entry name" value="IGPD"/>
    <property type="match status" value="1"/>
</dbReference>
<dbReference type="FunFam" id="3.30.230.40:FF:000001">
    <property type="entry name" value="Imidazoleglycerol-phosphate dehydratase HisB"/>
    <property type="match status" value="1"/>
</dbReference>
<dbReference type="FunFam" id="3.30.230.40:FF:000003">
    <property type="entry name" value="Imidazoleglycerol-phosphate dehydratase HisB"/>
    <property type="match status" value="1"/>
</dbReference>
<dbReference type="Gene3D" id="3.30.230.40">
    <property type="entry name" value="Imidazole glycerol phosphate dehydratase, domain 1"/>
    <property type="match status" value="2"/>
</dbReference>
<dbReference type="HAMAP" id="MF_00076">
    <property type="entry name" value="HisB"/>
    <property type="match status" value="1"/>
</dbReference>
<dbReference type="InterPro" id="IPR038494">
    <property type="entry name" value="IGPD_sf"/>
</dbReference>
<dbReference type="InterPro" id="IPR000807">
    <property type="entry name" value="ImidazoleglycerolP_deHydtase"/>
</dbReference>
<dbReference type="InterPro" id="IPR020565">
    <property type="entry name" value="ImidazoleglycerP_deHydtase_CS"/>
</dbReference>
<dbReference type="InterPro" id="IPR020568">
    <property type="entry name" value="Ribosomal_Su5_D2-typ_SF"/>
</dbReference>
<dbReference type="NCBIfam" id="NF002109">
    <property type="entry name" value="PRK00951.1-5"/>
    <property type="match status" value="1"/>
</dbReference>
<dbReference type="NCBIfam" id="NF002111">
    <property type="entry name" value="PRK00951.2-1"/>
    <property type="match status" value="1"/>
</dbReference>
<dbReference type="NCBIfam" id="NF002114">
    <property type="entry name" value="PRK00951.2-4"/>
    <property type="match status" value="1"/>
</dbReference>
<dbReference type="PANTHER" id="PTHR23133:SF2">
    <property type="entry name" value="IMIDAZOLEGLYCEROL-PHOSPHATE DEHYDRATASE"/>
    <property type="match status" value="1"/>
</dbReference>
<dbReference type="PANTHER" id="PTHR23133">
    <property type="entry name" value="IMIDAZOLEGLYCEROL-PHOSPHATE DEHYDRATASE HIS7"/>
    <property type="match status" value="1"/>
</dbReference>
<dbReference type="Pfam" id="PF00475">
    <property type="entry name" value="IGPD"/>
    <property type="match status" value="1"/>
</dbReference>
<dbReference type="SUPFAM" id="SSF54211">
    <property type="entry name" value="Ribosomal protein S5 domain 2-like"/>
    <property type="match status" value="2"/>
</dbReference>
<dbReference type="PROSITE" id="PS00954">
    <property type="entry name" value="IGP_DEHYDRATASE_1"/>
    <property type="match status" value="1"/>
</dbReference>
<dbReference type="PROSITE" id="PS00955">
    <property type="entry name" value="IGP_DEHYDRATASE_2"/>
    <property type="match status" value="1"/>
</dbReference>
<protein>
    <recommendedName>
        <fullName evidence="1">Imidazoleglycerol-phosphate dehydratase</fullName>
        <shortName evidence="1">IGPD</shortName>
        <ecNumber evidence="1">4.2.1.19</ecNumber>
    </recommendedName>
</protein>
<name>HIS7_BRUSU</name>
<organism>
    <name type="scientific">Brucella suis biovar 1 (strain 1330)</name>
    <dbReference type="NCBI Taxonomy" id="204722"/>
    <lineage>
        <taxon>Bacteria</taxon>
        <taxon>Pseudomonadati</taxon>
        <taxon>Pseudomonadota</taxon>
        <taxon>Alphaproteobacteria</taxon>
        <taxon>Hyphomicrobiales</taxon>
        <taxon>Brucellaceae</taxon>
        <taxon>Brucella/Ochrobactrum group</taxon>
        <taxon>Brucella</taxon>
    </lineage>
</organism>
<sequence>MTAESTRKASIERSTKETSIAVSVDLDGVGKFDITTGVGFFDHMLEQLSRHSLIDMRVMAKGDLHIDDHHTVEDTGIALGQAVAKALGERRGIVRYASLDLAMDDTLTGAAVDVSGRAFLVWNVNFTTAKIGTFDTELVREFFQAFAMNAGITLHINNHYGANNHHIAESTFKAVARVLRAALETDPRQKDAIPSTKGSLKG</sequence>
<gene>
    <name evidence="1" type="primary">hisB</name>
    <name type="ordered locus">BR2081</name>
    <name type="ordered locus">BS1330_I2075</name>
</gene>
<keyword id="KW-0028">Amino-acid biosynthesis</keyword>
<keyword id="KW-0963">Cytoplasm</keyword>
<keyword id="KW-0368">Histidine biosynthesis</keyword>
<keyword id="KW-0456">Lyase</keyword>
<comment type="catalytic activity">
    <reaction evidence="1">
        <text>D-erythro-1-(imidazol-4-yl)glycerol 3-phosphate = 3-(imidazol-4-yl)-2-oxopropyl phosphate + H2O</text>
        <dbReference type="Rhea" id="RHEA:11040"/>
        <dbReference type="ChEBI" id="CHEBI:15377"/>
        <dbReference type="ChEBI" id="CHEBI:57766"/>
        <dbReference type="ChEBI" id="CHEBI:58278"/>
        <dbReference type="EC" id="4.2.1.19"/>
    </reaction>
</comment>
<comment type="pathway">
    <text evidence="1">Amino-acid biosynthesis; L-histidine biosynthesis; L-histidine from 5-phospho-alpha-D-ribose 1-diphosphate: step 6/9.</text>
</comment>
<comment type="subcellular location">
    <subcellularLocation>
        <location evidence="1">Cytoplasm</location>
    </subcellularLocation>
</comment>
<comment type="similarity">
    <text evidence="1">Belongs to the imidazoleglycerol-phosphate dehydratase family.</text>
</comment>
<feature type="chain" id="PRO_0000158117" description="Imidazoleglycerol-phosphate dehydratase">
    <location>
        <begin position="1"/>
        <end position="202"/>
    </location>
</feature>
<accession>P64367</accession>
<accession>G0K929</accession>
<accession>Q8YE33</accession>
<evidence type="ECO:0000255" key="1">
    <source>
        <dbReference type="HAMAP-Rule" id="MF_00076"/>
    </source>
</evidence>
<proteinExistence type="inferred from homology"/>